<gene>
    <name type="primary">ahpC</name>
    <name type="ordered locus">SACOL0452</name>
</gene>
<name>AHPC_STAAC</name>
<reference key="1">
    <citation type="journal article" date="2005" name="J. Bacteriol.">
        <title>Insights on evolution of virulence and resistance from the complete genome analysis of an early methicillin-resistant Staphylococcus aureus strain and a biofilm-producing methicillin-resistant Staphylococcus epidermidis strain.</title>
        <authorList>
            <person name="Gill S.R."/>
            <person name="Fouts D.E."/>
            <person name="Archer G.L."/>
            <person name="Mongodin E.F."/>
            <person name="DeBoy R.T."/>
            <person name="Ravel J."/>
            <person name="Paulsen I.T."/>
            <person name="Kolonay J.F."/>
            <person name="Brinkac L.M."/>
            <person name="Beanan M.J."/>
            <person name="Dodson R.J."/>
            <person name="Daugherty S.C."/>
            <person name="Madupu R."/>
            <person name="Angiuoli S.V."/>
            <person name="Durkin A.S."/>
            <person name="Haft D.H."/>
            <person name="Vamathevan J.J."/>
            <person name="Khouri H."/>
            <person name="Utterback T.R."/>
            <person name="Lee C."/>
            <person name="Dimitrov G."/>
            <person name="Jiang L."/>
            <person name="Qin H."/>
            <person name="Weidman J."/>
            <person name="Tran K."/>
            <person name="Kang K.H."/>
            <person name="Hance I.R."/>
            <person name="Nelson K.E."/>
            <person name="Fraser C.M."/>
        </authorList>
    </citation>
    <scope>NUCLEOTIDE SEQUENCE [LARGE SCALE GENOMIC DNA]</scope>
    <source>
        <strain>COL</strain>
    </source>
</reference>
<organism>
    <name type="scientific">Staphylococcus aureus (strain COL)</name>
    <dbReference type="NCBI Taxonomy" id="93062"/>
    <lineage>
        <taxon>Bacteria</taxon>
        <taxon>Bacillati</taxon>
        <taxon>Bacillota</taxon>
        <taxon>Bacilli</taxon>
        <taxon>Bacillales</taxon>
        <taxon>Staphylococcaceae</taxon>
        <taxon>Staphylococcus</taxon>
    </lineage>
</organism>
<proteinExistence type="inferred from homology"/>
<dbReference type="EC" id="1.11.1.26" evidence="1"/>
<dbReference type="EMBL" id="CP000046">
    <property type="protein sequence ID" value="AAW38919.1"/>
    <property type="molecule type" value="Genomic_DNA"/>
</dbReference>
<dbReference type="RefSeq" id="WP_000052781.1">
    <property type="nucleotide sequence ID" value="NZ_JBGOFO010000001.1"/>
</dbReference>
<dbReference type="SMR" id="Q5HIR5"/>
<dbReference type="KEGG" id="sac:SACOL0452"/>
<dbReference type="HOGENOM" id="CLU_042529_21_3_9"/>
<dbReference type="Proteomes" id="UP000000530">
    <property type="component" value="Chromosome"/>
</dbReference>
<dbReference type="GO" id="GO:0005829">
    <property type="term" value="C:cytosol"/>
    <property type="evidence" value="ECO:0007669"/>
    <property type="project" value="TreeGrafter"/>
</dbReference>
<dbReference type="GO" id="GO:0102039">
    <property type="term" value="F:NADH-dependent peroxiredoxin activity"/>
    <property type="evidence" value="ECO:0007669"/>
    <property type="project" value="UniProtKB-EC"/>
</dbReference>
<dbReference type="GO" id="GO:0008379">
    <property type="term" value="F:thioredoxin peroxidase activity"/>
    <property type="evidence" value="ECO:0007669"/>
    <property type="project" value="TreeGrafter"/>
</dbReference>
<dbReference type="GO" id="GO:0045454">
    <property type="term" value="P:cell redox homeostasis"/>
    <property type="evidence" value="ECO:0007669"/>
    <property type="project" value="TreeGrafter"/>
</dbReference>
<dbReference type="GO" id="GO:0033554">
    <property type="term" value="P:cellular response to stress"/>
    <property type="evidence" value="ECO:0007669"/>
    <property type="project" value="TreeGrafter"/>
</dbReference>
<dbReference type="GO" id="GO:0042744">
    <property type="term" value="P:hydrogen peroxide catabolic process"/>
    <property type="evidence" value="ECO:0007669"/>
    <property type="project" value="TreeGrafter"/>
</dbReference>
<dbReference type="GO" id="GO:0006979">
    <property type="term" value="P:response to oxidative stress"/>
    <property type="evidence" value="ECO:0007669"/>
    <property type="project" value="InterPro"/>
</dbReference>
<dbReference type="CDD" id="cd03015">
    <property type="entry name" value="PRX_Typ2cys"/>
    <property type="match status" value="1"/>
</dbReference>
<dbReference type="FunFam" id="3.40.30.10:FF:000002">
    <property type="entry name" value="Alkyl hydroperoxide reductase C"/>
    <property type="match status" value="1"/>
</dbReference>
<dbReference type="Gene3D" id="3.40.30.10">
    <property type="entry name" value="Glutaredoxin"/>
    <property type="match status" value="1"/>
</dbReference>
<dbReference type="InterPro" id="IPR017559">
    <property type="entry name" value="AhpC"/>
</dbReference>
<dbReference type="InterPro" id="IPR000866">
    <property type="entry name" value="AhpC/TSA"/>
</dbReference>
<dbReference type="InterPro" id="IPR050217">
    <property type="entry name" value="Peroxiredoxin"/>
</dbReference>
<dbReference type="InterPro" id="IPR024706">
    <property type="entry name" value="Peroxiredoxin_AhpC-typ"/>
</dbReference>
<dbReference type="InterPro" id="IPR019479">
    <property type="entry name" value="Peroxiredoxin_C"/>
</dbReference>
<dbReference type="InterPro" id="IPR036249">
    <property type="entry name" value="Thioredoxin-like_sf"/>
</dbReference>
<dbReference type="InterPro" id="IPR013766">
    <property type="entry name" value="Thioredoxin_domain"/>
</dbReference>
<dbReference type="NCBIfam" id="TIGR03137">
    <property type="entry name" value="AhpC"/>
    <property type="match status" value="1"/>
</dbReference>
<dbReference type="PANTHER" id="PTHR10681:SF121">
    <property type="entry name" value="ALKYL HYDROPEROXIDE REDUCTASE C"/>
    <property type="match status" value="1"/>
</dbReference>
<dbReference type="PANTHER" id="PTHR10681">
    <property type="entry name" value="THIOREDOXIN PEROXIDASE"/>
    <property type="match status" value="1"/>
</dbReference>
<dbReference type="Pfam" id="PF10417">
    <property type="entry name" value="1-cysPrx_C"/>
    <property type="match status" value="1"/>
</dbReference>
<dbReference type="Pfam" id="PF00578">
    <property type="entry name" value="AhpC-TSA"/>
    <property type="match status" value="1"/>
</dbReference>
<dbReference type="PIRSF" id="PIRSF000239">
    <property type="entry name" value="AHPC"/>
    <property type="match status" value="1"/>
</dbReference>
<dbReference type="SUPFAM" id="SSF52833">
    <property type="entry name" value="Thioredoxin-like"/>
    <property type="match status" value="1"/>
</dbReference>
<dbReference type="PROSITE" id="PS51352">
    <property type="entry name" value="THIOREDOXIN_2"/>
    <property type="match status" value="1"/>
</dbReference>
<sequence length="189" mass="20977">MSLINKEILPFTAQAFDPKKDQFKEVTQEDLKGSWSVVCFYPADFSFVCPTELEDLQNQYEELQKLGVNVFSVSTDTHFVHKAWHDHSDAISKITYTMIGDPSQTITRNFDVLDEATGLAQRGTFIIDPDGVVQASEINADGIGRDASTLAHKIKAAQYVRKNPGEVCPAKWEEGAKTLQPGLDLVGKI</sequence>
<protein>
    <recommendedName>
        <fullName>Alkyl hydroperoxide reductase C</fullName>
        <ecNumber evidence="1">1.11.1.26</ecNumber>
    </recommendedName>
    <alternativeName>
        <fullName>Peroxiredoxin</fullName>
    </alternativeName>
    <alternativeName>
        <fullName>Thioredoxin peroxidase</fullName>
    </alternativeName>
</protein>
<keyword id="KW-0049">Antioxidant</keyword>
<keyword id="KW-0963">Cytoplasm</keyword>
<keyword id="KW-1015">Disulfide bond</keyword>
<keyword id="KW-0560">Oxidoreductase</keyword>
<keyword id="KW-0575">Peroxidase</keyword>
<keyword id="KW-0676">Redox-active center</keyword>
<evidence type="ECO:0000250" key="1">
    <source>
        <dbReference type="UniProtKB" id="P0A251"/>
    </source>
</evidence>
<evidence type="ECO:0000250" key="2">
    <source>
        <dbReference type="UniProtKB" id="P0AE08"/>
    </source>
</evidence>
<evidence type="ECO:0000255" key="3">
    <source>
        <dbReference type="PROSITE-ProRule" id="PRU00691"/>
    </source>
</evidence>
<evidence type="ECO:0000305" key="4"/>
<comment type="function">
    <text evidence="1">Thiol-specific peroxidase that catalyzes the reduction of hydrogen peroxide and organic hydroperoxides to water and alcohols, respectively. Plays a role in cell protection against oxidative stress by detoxifying peroxides.</text>
</comment>
<comment type="catalytic activity">
    <reaction evidence="1">
        <text>a hydroperoxide + NADH + H(+) = an alcohol + NAD(+) + H2O</text>
        <dbReference type="Rhea" id="RHEA:62628"/>
        <dbReference type="ChEBI" id="CHEBI:15377"/>
        <dbReference type="ChEBI" id="CHEBI:15378"/>
        <dbReference type="ChEBI" id="CHEBI:30879"/>
        <dbReference type="ChEBI" id="CHEBI:35924"/>
        <dbReference type="ChEBI" id="CHEBI:57540"/>
        <dbReference type="ChEBI" id="CHEBI:57945"/>
        <dbReference type="EC" id="1.11.1.26"/>
    </reaction>
</comment>
<comment type="subunit">
    <text evidence="1">Homodimer; disulfide-linked, upon oxidation. 5 homodimers assemble to form a ring-like decamer.</text>
</comment>
<comment type="subcellular location">
    <subcellularLocation>
        <location evidence="2">Cytoplasm</location>
    </subcellularLocation>
</comment>
<comment type="miscellaneous">
    <text evidence="1">The active site is a conserved redox-active cysteine residue, the peroxidatic cysteine (C(P)), which makes the nucleophilic attack on the peroxide substrate. The peroxide oxidizes the C(P)-SH to cysteine sulfenic acid (C(P)-SOH), which then reacts with another cysteine residue, the resolving cysteine (C(R)), to form a disulfide bridge. The disulfide is subsequently reduced by an appropriate electron donor to complete the catalytic cycle. In this typical 2-Cys peroxiredoxin, C(R) is provided by the other dimeric subunit to form an intersubunit disulfide. The disulfide is subsequently reduced by AhpF.</text>
</comment>
<comment type="similarity">
    <text evidence="4">Belongs to the peroxiredoxin family. AhpC/Prx1 subfamily.</text>
</comment>
<feature type="chain" id="PRO_0000135122" description="Alkyl hydroperoxide reductase C">
    <location>
        <begin position="1"/>
        <end position="189"/>
    </location>
</feature>
<feature type="domain" description="Thioredoxin" evidence="3">
    <location>
        <begin position="2"/>
        <end position="159"/>
    </location>
</feature>
<feature type="active site" description="Cysteine sulfenic acid (-SOH) intermediate" evidence="1">
    <location>
        <position position="49"/>
    </location>
</feature>
<feature type="disulfide bond" description="Interchain (with C-168); in linked form" evidence="1">
    <location>
        <position position="49"/>
    </location>
</feature>
<feature type="disulfide bond" description="Interchain (with C-49); in linked form" evidence="1">
    <location>
        <position position="168"/>
    </location>
</feature>
<accession>Q5HIR5</accession>